<name>PCO3_ARATH</name>
<protein>
    <recommendedName>
        <fullName evidence="4">Plant cysteine oxidase 3</fullName>
        <shortName evidence="5">AtPCO3</shortName>
        <ecNumber evidence="2 7">1.13.11.20</ecNumber>
    </recommendedName>
    <alternativeName>
        <fullName evidence="3">NIFS-like protein 2</fullName>
        <shortName>NifS2</shortName>
    </alternativeName>
</protein>
<sequence>MLSRLFKAGEKVLSNLVSKKDIYMASRNQEKSPKVQELYDLCKETFTGKAPSPASMAIQKLCSVLDSVSPADVGLEEVSQDDDRGYGVSGVSRFNRVGRWAQPITFLDIHECDTFTMCIFCFPTSSVIPLHDHPEMAVFSKILYGSLHVKAYDWVEPPCIITQDKGVPGSLPARLAKLVSDKVITPQSEIPALYPKTGGNLHCFTALTPCAVLDILSPPYKESVGRSCSYYMDYPFSTFALENGMKKVDEGKEDEYAWLVQIDTPDDLHMRPGSYTGPTIRV</sequence>
<proteinExistence type="evidence at protein level"/>
<gene>
    <name evidence="4" type="primary">PCO3</name>
    <name evidence="3" type="synonym">CpNIFS2</name>
    <name evidence="8" type="ordered locus">At1g18490</name>
    <name evidence="9" type="ORF">F15H18.26</name>
</gene>
<feature type="chain" id="PRO_0000432451" description="Plant cysteine oxidase 3">
    <location>
        <begin position="1"/>
        <end position="282"/>
    </location>
</feature>
<feature type="binding site" evidence="1">
    <location>
        <position position="131"/>
    </location>
    <ligand>
        <name>Fe cation</name>
        <dbReference type="ChEBI" id="CHEBI:24875"/>
        <note>catalytic</note>
    </ligand>
</feature>
<feature type="binding site" evidence="1">
    <location>
        <position position="133"/>
    </location>
    <ligand>
        <name>Fe cation</name>
        <dbReference type="ChEBI" id="CHEBI:24875"/>
        <note>catalytic</note>
    </ligand>
</feature>
<feature type="binding site" evidence="1">
    <location>
        <position position="202"/>
    </location>
    <ligand>
        <name>Fe cation</name>
        <dbReference type="ChEBI" id="CHEBI:24875"/>
        <note>catalytic</note>
    </ligand>
</feature>
<feature type="splice variant" id="VSP_057518" description="In isoform 2." evidence="6">
    <location>
        <position position="173"/>
    </location>
</feature>
<feature type="sequence conflict" description="In Ref. 4; AAM67070." evidence="6" ref="4">
    <original>G</original>
    <variation>V</variation>
    <location>
        <position position="198"/>
    </location>
</feature>
<comment type="function">
    <text evidence="2 7">Catalyzes the oxidation of N-terminal cysteine residues (N-Cys), thus preparing the protein for N-end rule pathway-mediated proteasomal degradation, upstream of the N-end rule enzymes ATE1, ATE2 and PRT6 (Probable) (PubMed:29848548). Controls the preparation of the group VII ethylene response factor (ERF-VII) proteins for degradation via the 26S proteasome N-end rule pathway (Probable) (PubMed:29848548). Acts as an oxygen sensor that controls the stability of ERF-VII proteins, which are stabilized in flooding-induced hypoxia, and regulate transcriptional adaptation to these adverse conditions (Probable) (PubMed:29848548).</text>
</comment>
<comment type="catalytic activity">
    <reaction evidence="2 7">
        <text>L-cysteine + O2 = 3-sulfino-L-alanine + H(+)</text>
        <dbReference type="Rhea" id="RHEA:20441"/>
        <dbReference type="ChEBI" id="CHEBI:15378"/>
        <dbReference type="ChEBI" id="CHEBI:15379"/>
        <dbReference type="ChEBI" id="CHEBI:35235"/>
        <dbReference type="ChEBI" id="CHEBI:61085"/>
        <dbReference type="EC" id="1.13.11.20"/>
    </reaction>
    <physiologicalReaction direction="left-to-right" evidence="2 7">
        <dbReference type="Rhea" id="RHEA:20442"/>
    </physiologicalReaction>
</comment>
<comment type="cofactor">
    <cofactor evidence="1">
        <name>Fe(2+)</name>
        <dbReference type="ChEBI" id="CHEBI:29033"/>
    </cofactor>
    <text evidence="1">Binds 1 Fe(2+) cation per subunit.</text>
</comment>
<comment type="biophysicochemical properties">
    <kinetics>
        <KM evidence="2">0.56 mM for CGGAIISDFIPPPR peptide</KM>
        <Vmax evidence="2">8.43 umol/min/mg enzyme with CGGAIISDFIPPPR peptide as substrate</Vmax>
        <text evidence="2">kcat is 4.7 sec(-1) with CGGAIISDFIPPPR peptide as substrate.</text>
    </kinetics>
    <phDependence>
        <text evidence="2">Optimum pH is 8.5 with CGGAIISDFIPPPR peptide as substrate.</text>
    </phDependence>
</comment>
<comment type="subcellular location">
    <subcellularLocation>
        <location evidence="7">Nucleus</location>
    </subcellularLocation>
    <subcellularLocation>
        <location evidence="7">Cytoplasm</location>
    </subcellularLocation>
</comment>
<comment type="alternative products">
    <event type="alternative splicing"/>
    <isoform>
        <id>Q1G3U6-1</id>
        <name>1</name>
        <sequence type="displayed"/>
    </isoform>
    <isoform>
        <id>Q1G3U6-2</id>
        <name>2</name>
        <sequence type="described" ref="VSP_057518"/>
    </isoform>
</comment>
<comment type="similarity">
    <text evidence="6">Belongs to the cysteine dioxygenase family.</text>
</comment>
<comment type="caution">
    <text evidence="3">Was originally identified as a putative plastidic SufS-like protein and thus called CpNifS2.</text>
</comment>
<comment type="sequence caution" evidence="6">
    <conflict type="erroneous initiation">
        <sequence resource="EMBL-CDS" id="AAK96846"/>
    </conflict>
    <text>Truncated N-terminus.</text>
</comment>
<comment type="sequence caution" evidence="6">
    <conflict type="erroneous initiation">
        <sequence resource="EMBL-CDS" id="AAM67070"/>
    </conflict>
    <text>Truncated N-terminus.</text>
</comment>
<evidence type="ECO:0000250" key="1">
    <source>
        <dbReference type="UniProtKB" id="Q9SJI9"/>
    </source>
</evidence>
<evidence type="ECO:0000269" key="2">
    <source>
    </source>
</evidence>
<evidence type="ECO:0000303" key="3">
    <source>
    </source>
</evidence>
<evidence type="ECO:0000303" key="4">
    <source>
    </source>
</evidence>
<evidence type="ECO:0000303" key="5">
    <source>
    </source>
</evidence>
<evidence type="ECO:0000305" key="6"/>
<evidence type="ECO:0000305" key="7">
    <source>
    </source>
</evidence>
<evidence type="ECO:0000312" key="8">
    <source>
        <dbReference type="Araport" id="AT1G18490"/>
    </source>
</evidence>
<evidence type="ECO:0000312" key="9">
    <source>
        <dbReference type="EMBL" id="AC013354"/>
    </source>
</evidence>
<organism>
    <name type="scientific">Arabidopsis thaliana</name>
    <name type="common">Mouse-ear cress</name>
    <dbReference type="NCBI Taxonomy" id="3702"/>
    <lineage>
        <taxon>Eukaryota</taxon>
        <taxon>Viridiplantae</taxon>
        <taxon>Streptophyta</taxon>
        <taxon>Embryophyta</taxon>
        <taxon>Tracheophyta</taxon>
        <taxon>Spermatophyta</taxon>
        <taxon>Magnoliopsida</taxon>
        <taxon>eudicotyledons</taxon>
        <taxon>Gunneridae</taxon>
        <taxon>Pentapetalae</taxon>
        <taxon>rosids</taxon>
        <taxon>malvids</taxon>
        <taxon>Brassicales</taxon>
        <taxon>Brassicaceae</taxon>
        <taxon>Camelineae</taxon>
        <taxon>Arabidopsis</taxon>
    </lineage>
</organism>
<keyword id="KW-0025">Alternative splicing</keyword>
<keyword id="KW-0963">Cytoplasm</keyword>
<keyword id="KW-0408">Iron</keyword>
<keyword id="KW-0479">Metal-binding</keyword>
<keyword id="KW-0539">Nucleus</keyword>
<keyword id="KW-0560">Oxidoreductase</keyword>
<keyword id="KW-1185">Reference proteome</keyword>
<accession>Q1G3U6</accession>
<accession>Q8L8X2</accession>
<accession>Q940G4</accession>
<dbReference type="EC" id="1.13.11.20" evidence="2 7"/>
<dbReference type="EMBL" id="AC013354">
    <property type="status" value="NOT_ANNOTATED_CDS"/>
    <property type="molecule type" value="Genomic_DNA"/>
</dbReference>
<dbReference type="EMBL" id="CP002684">
    <property type="protein sequence ID" value="AEE29722.1"/>
    <property type="molecule type" value="Genomic_DNA"/>
</dbReference>
<dbReference type="EMBL" id="DQ487488">
    <property type="protein sequence ID" value="ABF59200.1"/>
    <property type="molecule type" value="mRNA"/>
</dbReference>
<dbReference type="EMBL" id="AY088754">
    <property type="protein sequence ID" value="AAM67070.1"/>
    <property type="status" value="ALT_INIT"/>
    <property type="molecule type" value="mRNA"/>
</dbReference>
<dbReference type="EMBL" id="AY054655">
    <property type="protein sequence ID" value="AAK96846.1"/>
    <property type="status" value="ALT_INIT"/>
    <property type="molecule type" value="mRNA"/>
</dbReference>
<dbReference type="EMBL" id="AY072501">
    <property type="protein sequence ID" value="AAL66916.1"/>
    <property type="molecule type" value="mRNA"/>
</dbReference>
<dbReference type="RefSeq" id="NP_564055.1">
    <molecule id="Q1G3U6-1"/>
    <property type="nucleotide sequence ID" value="NM_101707.4"/>
</dbReference>
<dbReference type="SMR" id="Q1G3U6"/>
<dbReference type="FunCoup" id="Q1G3U6">
    <property type="interactions" value="2263"/>
</dbReference>
<dbReference type="IntAct" id="Q1G3U6">
    <property type="interactions" value="1"/>
</dbReference>
<dbReference type="STRING" id="3702.Q1G3U6"/>
<dbReference type="PaxDb" id="3702-AT1G18490.1"/>
<dbReference type="ProteomicsDB" id="236444">
    <molecule id="Q1G3U6-1"/>
</dbReference>
<dbReference type="EnsemblPlants" id="AT1G18490.1">
    <molecule id="Q1G3U6-1"/>
    <property type="protein sequence ID" value="AT1G18490.1"/>
    <property type="gene ID" value="AT1G18490"/>
</dbReference>
<dbReference type="GeneID" id="838430"/>
<dbReference type="Gramene" id="AT1G18490.1">
    <molecule id="Q1G3U6-1"/>
    <property type="protein sequence ID" value="AT1G18490.1"/>
    <property type="gene ID" value="AT1G18490"/>
</dbReference>
<dbReference type="KEGG" id="ath:AT1G18490"/>
<dbReference type="Araport" id="AT1G18490"/>
<dbReference type="TAIR" id="AT1G18490">
    <property type="gene designation" value="PCO3"/>
</dbReference>
<dbReference type="eggNOG" id="KOG4281">
    <property type="taxonomic scope" value="Eukaryota"/>
</dbReference>
<dbReference type="HOGENOM" id="CLU_061320_3_2_1"/>
<dbReference type="InParanoid" id="Q1G3U6"/>
<dbReference type="OMA" id="KVSVRCF"/>
<dbReference type="OrthoDB" id="271433at2759"/>
<dbReference type="PhylomeDB" id="Q1G3U6"/>
<dbReference type="SABIO-RK" id="Q1G3U6"/>
<dbReference type="PRO" id="PR:Q1G3U6"/>
<dbReference type="Proteomes" id="UP000006548">
    <property type="component" value="Chromosome 1"/>
</dbReference>
<dbReference type="ExpressionAtlas" id="Q1G3U6">
    <property type="expression patterns" value="baseline and differential"/>
</dbReference>
<dbReference type="GO" id="GO:0005737">
    <property type="term" value="C:cytoplasm"/>
    <property type="evidence" value="ECO:0007669"/>
    <property type="project" value="UniProtKB-SubCell"/>
</dbReference>
<dbReference type="GO" id="GO:0005634">
    <property type="term" value="C:nucleus"/>
    <property type="evidence" value="ECO:0007669"/>
    <property type="project" value="UniProtKB-SubCell"/>
</dbReference>
<dbReference type="GO" id="GO:0017172">
    <property type="term" value="F:cysteine dioxygenase activity"/>
    <property type="evidence" value="ECO:0007669"/>
    <property type="project" value="UniProtKB-EC"/>
</dbReference>
<dbReference type="GO" id="GO:0005506">
    <property type="term" value="F:iron ion binding"/>
    <property type="evidence" value="ECO:0000250"/>
    <property type="project" value="UniProtKB"/>
</dbReference>
<dbReference type="GO" id="GO:0071456">
    <property type="term" value="P:cellular response to hypoxia"/>
    <property type="evidence" value="ECO:0000314"/>
    <property type="project" value="UniProtKB"/>
</dbReference>
<dbReference type="GO" id="GO:0070483">
    <property type="term" value="P:detection of hypoxia"/>
    <property type="evidence" value="ECO:0000314"/>
    <property type="project" value="UniProtKB"/>
</dbReference>
<dbReference type="GO" id="GO:0018171">
    <property type="term" value="P:peptidyl-cysteine oxidation"/>
    <property type="evidence" value="ECO:0000314"/>
    <property type="project" value="UniProtKB"/>
</dbReference>
<dbReference type="CDD" id="cd20289">
    <property type="entry name" value="cupin_ADO"/>
    <property type="match status" value="1"/>
</dbReference>
<dbReference type="Gene3D" id="2.60.120.10">
    <property type="entry name" value="Jelly Rolls"/>
    <property type="match status" value="1"/>
</dbReference>
<dbReference type="InterPro" id="IPR012864">
    <property type="entry name" value="PCO/ADO"/>
</dbReference>
<dbReference type="InterPro" id="IPR014710">
    <property type="entry name" value="RmlC-like_jellyroll"/>
</dbReference>
<dbReference type="InterPro" id="IPR011051">
    <property type="entry name" value="RmlC_Cupin_sf"/>
</dbReference>
<dbReference type="PANTHER" id="PTHR22966">
    <property type="entry name" value="2-AMINOETHANETHIOL DIOXYGENASE"/>
    <property type="match status" value="1"/>
</dbReference>
<dbReference type="PANTHER" id="PTHR22966:SF29">
    <property type="entry name" value="PLANT CYSTEINE OXIDASE 3"/>
    <property type="match status" value="1"/>
</dbReference>
<dbReference type="Pfam" id="PF07847">
    <property type="entry name" value="PCO_ADO"/>
    <property type="match status" value="1"/>
</dbReference>
<dbReference type="SUPFAM" id="SSF51182">
    <property type="entry name" value="RmlC-like cupins"/>
    <property type="match status" value="1"/>
</dbReference>
<reference key="1">
    <citation type="journal article" date="2000" name="Nature">
        <title>Sequence and analysis of chromosome 1 of the plant Arabidopsis thaliana.</title>
        <authorList>
            <person name="Theologis A."/>
            <person name="Ecker J.R."/>
            <person name="Palm C.J."/>
            <person name="Federspiel N.A."/>
            <person name="Kaul S."/>
            <person name="White O."/>
            <person name="Alonso J."/>
            <person name="Altafi H."/>
            <person name="Araujo R."/>
            <person name="Bowman C.L."/>
            <person name="Brooks S.Y."/>
            <person name="Buehler E."/>
            <person name="Chan A."/>
            <person name="Chao Q."/>
            <person name="Chen H."/>
            <person name="Cheuk R.F."/>
            <person name="Chin C.W."/>
            <person name="Chung M.K."/>
            <person name="Conn L."/>
            <person name="Conway A.B."/>
            <person name="Conway A.R."/>
            <person name="Creasy T.H."/>
            <person name="Dewar K."/>
            <person name="Dunn P."/>
            <person name="Etgu P."/>
            <person name="Feldblyum T.V."/>
            <person name="Feng J.-D."/>
            <person name="Fong B."/>
            <person name="Fujii C.Y."/>
            <person name="Gill J.E."/>
            <person name="Goldsmith A.D."/>
            <person name="Haas B."/>
            <person name="Hansen N.F."/>
            <person name="Hughes B."/>
            <person name="Huizar L."/>
            <person name="Hunter J.L."/>
            <person name="Jenkins J."/>
            <person name="Johnson-Hopson C."/>
            <person name="Khan S."/>
            <person name="Khaykin E."/>
            <person name="Kim C.J."/>
            <person name="Koo H.L."/>
            <person name="Kremenetskaia I."/>
            <person name="Kurtz D.B."/>
            <person name="Kwan A."/>
            <person name="Lam B."/>
            <person name="Langin-Hooper S."/>
            <person name="Lee A."/>
            <person name="Lee J.M."/>
            <person name="Lenz C.A."/>
            <person name="Li J.H."/>
            <person name="Li Y.-P."/>
            <person name="Lin X."/>
            <person name="Liu S.X."/>
            <person name="Liu Z.A."/>
            <person name="Luros J.S."/>
            <person name="Maiti R."/>
            <person name="Marziali A."/>
            <person name="Militscher J."/>
            <person name="Miranda M."/>
            <person name="Nguyen M."/>
            <person name="Nierman W.C."/>
            <person name="Osborne B.I."/>
            <person name="Pai G."/>
            <person name="Peterson J."/>
            <person name="Pham P.K."/>
            <person name="Rizzo M."/>
            <person name="Rooney T."/>
            <person name="Rowley D."/>
            <person name="Sakano H."/>
            <person name="Salzberg S.L."/>
            <person name="Schwartz J.R."/>
            <person name="Shinn P."/>
            <person name="Southwick A.M."/>
            <person name="Sun H."/>
            <person name="Tallon L.J."/>
            <person name="Tambunga G."/>
            <person name="Toriumi M.J."/>
            <person name="Town C.D."/>
            <person name="Utterback T."/>
            <person name="Van Aken S."/>
            <person name="Vaysberg M."/>
            <person name="Vysotskaia V.S."/>
            <person name="Walker M."/>
            <person name="Wu D."/>
            <person name="Yu G."/>
            <person name="Fraser C.M."/>
            <person name="Venter J.C."/>
            <person name="Davis R.W."/>
        </authorList>
    </citation>
    <scope>NUCLEOTIDE SEQUENCE [LARGE SCALE GENOMIC DNA]</scope>
    <source>
        <strain>cv. Columbia</strain>
    </source>
</reference>
<reference key="2">
    <citation type="journal article" date="2017" name="Plant J.">
        <title>Araport11: a complete reannotation of the Arabidopsis thaliana reference genome.</title>
        <authorList>
            <person name="Cheng C.Y."/>
            <person name="Krishnakumar V."/>
            <person name="Chan A.P."/>
            <person name="Thibaud-Nissen F."/>
            <person name="Schobel S."/>
            <person name="Town C.D."/>
        </authorList>
    </citation>
    <scope>GENOME REANNOTATION</scope>
    <source>
        <strain>cv. Columbia</strain>
    </source>
</reference>
<reference key="3">
    <citation type="journal article" date="2006" name="Plant Biotechnol. J.">
        <title>Simultaneous high-throughput recombinational cloning of open reading frames in closed and open configurations.</title>
        <authorList>
            <person name="Underwood B.A."/>
            <person name="Vanderhaeghen R."/>
            <person name="Whitford R."/>
            <person name="Town C.D."/>
            <person name="Hilson P."/>
        </authorList>
    </citation>
    <scope>NUCLEOTIDE SEQUENCE [LARGE SCALE MRNA] (ISOFORM 1)</scope>
    <source>
        <strain>cv. Columbia</strain>
    </source>
</reference>
<reference key="4">
    <citation type="submission" date="2002-03" db="EMBL/GenBank/DDBJ databases">
        <title>Full-length cDNA from Arabidopsis thaliana.</title>
        <authorList>
            <person name="Brover V.V."/>
            <person name="Troukhan M.E."/>
            <person name="Alexandrov N.A."/>
            <person name="Lu Y.-P."/>
            <person name="Flavell R.B."/>
            <person name="Feldmann K.A."/>
        </authorList>
    </citation>
    <scope>NUCLEOTIDE SEQUENCE [LARGE SCALE MRNA] (ISOFORM 1)</scope>
</reference>
<reference key="5">
    <citation type="journal article" date="2003" name="Science">
        <title>Empirical analysis of transcriptional activity in the Arabidopsis genome.</title>
        <authorList>
            <person name="Yamada K."/>
            <person name="Lim J."/>
            <person name="Dale J.M."/>
            <person name="Chen H."/>
            <person name="Shinn P."/>
            <person name="Palm C.J."/>
            <person name="Southwick A.M."/>
            <person name="Wu H.C."/>
            <person name="Kim C.J."/>
            <person name="Nguyen M."/>
            <person name="Pham P.K."/>
            <person name="Cheuk R.F."/>
            <person name="Karlin-Newmann G."/>
            <person name="Liu S.X."/>
            <person name="Lam B."/>
            <person name="Sakano H."/>
            <person name="Wu T."/>
            <person name="Yu G."/>
            <person name="Miranda M."/>
            <person name="Quach H.L."/>
            <person name="Tripp M."/>
            <person name="Chang C.H."/>
            <person name="Lee J.M."/>
            <person name="Toriumi M.J."/>
            <person name="Chan M.M."/>
            <person name="Tang C.C."/>
            <person name="Onodera C.S."/>
            <person name="Deng J.M."/>
            <person name="Akiyama K."/>
            <person name="Ansari Y."/>
            <person name="Arakawa T."/>
            <person name="Banh J."/>
            <person name="Banno F."/>
            <person name="Bowser L."/>
            <person name="Brooks S.Y."/>
            <person name="Carninci P."/>
            <person name="Chao Q."/>
            <person name="Choy N."/>
            <person name="Enju A."/>
            <person name="Goldsmith A.D."/>
            <person name="Gurjal M."/>
            <person name="Hansen N.F."/>
            <person name="Hayashizaki Y."/>
            <person name="Johnson-Hopson C."/>
            <person name="Hsuan V.W."/>
            <person name="Iida K."/>
            <person name="Karnes M."/>
            <person name="Khan S."/>
            <person name="Koesema E."/>
            <person name="Ishida J."/>
            <person name="Jiang P.X."/>
            <person name="Jones T."/>
            <person name="Kawai J."/>
            <person name="Kamiya A."/>
            <person name="Meyers C."/>
            <person name="Nakajima M."/>
            <person name="Narusaka M."/>
            <person name="Seki M."/>
            <person name="Sakurai T."/>
            <person name="Satou M."/>
            <person name="Tamse R."/>
            <person name="Vaysberg M."/>
            <person name="Wallender E.K."/>
            <person name="Wong C."/>
            <person name="Yamamura Y."/>
            <person name="Yuan S."/>
            <person name="Shinozaki K."/>
            <person name="Davis R.W."/>
            <person name="Theologis A."/>
            <person name="Ecker J.R."/>
        </authorList>
    </citation>
    <scope>NUCLEOTIDE SEQUENCE [LARGE SCALE MRNA] OF 33-282 (ISOFORM 2)</scope>
    <source>
        <strain>cv. Columbia</strain>
    </source>
</reference>
<reference key="6">
    <citation type="journal article" date="2008" name="Plant Cell">
        <title>The Arabidopsis onset of leaf death5 mutation of quinolinate synthase affects nicotinamide adenine dinucleotide biosynthesis and causes early ageing.</title>
        <authorList>
            <person name="Schippers J.H."/>
            <person name="Nunes-Nesi A."/>
            <person name="Apetrei R."/>
            <person name="Hille J."/>
            <person name="Fernie A.R."/>
            <person name="Dijkwel P.P."/>
        </authorList>
    </citation>
    <scope>IDENTIFICATION</scope>
</reference>
<reference key="7">
    <citation type="journal article" date="2014" name="Nat. Commun.">
        <title>Plant cysteine oxidases control the oxygen-dependent branch of the N-end-rule pathway.</title>
        <authorList>
            <person name="Weits D.A."/>
            <person name="Giuntoli B."/>
            <person name="Kosmacz M."/>
            <person name="Parlanti S."/>
            <person name="Hubberten H.M."/>
            <person name="Riegler H."/>
            <person name="Hoefgen R."/>
            <person name="Perata P."/>
            <person name="van Dongen J.T."/>
            <person name="Licausi F."/>
        </authorList>
    </citation>
    <scope>FUNCTION</scope>
    <scope>CATALYTIC ACTIVITY</scope>
    <scope>GENE FAMILY</scope>
    <scope>NOMENCLATURE</scope>
    <scope>SUBCELLULAR LOCATION</scope>
</reference>
<reference key="8">
    <citation type="journal article" date="2018" name="J. Biol. Chem.">
        <title>The plant cysteine oxidases from Arabidopsis thaliana are kinetically tailored to act as oxygen sensors.</title>
        <authorList>
            <person name="White M.D."/>
            <person name="Kamps J.J.A.G."/>
            <person name="East S."/>
            <person name="Taylor Kearney L.J."/>
            <person name="Flashman E."/>
        </authorList>
    </citation>
    <scope>FUNCTION</scope>
    <scope>CATALYTIC ACTIVITY</scope>
    <scope>BIOPHYSICOCHEMICAL PROPERTIES</scope>
</reference>